<sequence length="423" mass="45926">MKAELIAVGTEILTGQITNTNAQFLSEKLAELGIDVYFHTAVGDNENRLLSVLDQSSKRSDLVILCGGLGPTEDDLTKQTLAKFLGKELIFDEEASKKLDSFFATRPKHTRTPNNERQAQIVEGAVPLQNLTGLAVGGIITVEGVTYVVLPGPPSELKPMVNQELIPALTENHTTLYSRVLRFFGVGESQLVTIIKDLIVNQTDPTIAPYAKVGEVTLRLSTKASSQEEADRKLDVLEEQIRSTKTLDGKSLSDLIYGYGESNSLAYEVFYLLKKYGKTITAAESLTAGLFQASVADFPGASQVFKGGFVTYSMEEKAKMLGIPLSKLEEHGVVSHFTAEKMAEGARVKTDSDYGIALTGVAGPDALEGHQAGTVFIGIADRNQVRSIKVVIGGRSRSDVRYISTLYAFNLVRQALLQEDNSI</sequence>
<organism>
    <name type="scientific">Streptococcus thermophilus (strain ATCC BAA-491 / LMD-9)</name>
    <dbReference type="NCBI Taxonomy" id="322159"/>
    <lineage>
        <taxon>Bacteria</taxon>
        <taxon>Bacillati</taxon>
        <taxon>Bacillota</taxon>
        <taxon>Bacilli</taxon>
        <taxon>Lactobacillales</taxon>
        <taxon>Streptococcaceae</taxon>
        <taxon>Streptococcus</taxon>
    </lineage>
</organism>
<name>CINA_STRTD</name>
<protein>
    <recommendedName>
        <fullName evidence="1">Putative competence-damage inducible protein</fullName>
    </recommendedName>
</protein>
<feature type="chain" id="PRO_1000058739" description="Putative competence-damage inducible protein">
    <location>
        <begin position="1"/>
        <end position="423"/>
    </location>
</feature>
<accession>Q03MX6</accession>
<reference key="1">
    <citation type="journal article" date="2006" name="Proc. Natl. Acad. Sci. U.S.A.">
        <title>Comparative genomics of the lactic acid bacteria.</title>
        <authorList>
            <person name="Makarova K.S."/>
            <person name="Slesarev A."/>
            <person name="Wolf Y.I."/>
            <person name="Sorokin A."/>
            <person name="Mirkin B."/>
            <person name="Koonin E.V."/>
            <person name="Pavlov A."/>
            <person name="Pavlova N."/>
            <person name="Karamychev V."/>
            <person name="Polouchine N."/>
            <person name="Shakhova V."/>
            <person name="Grigoriev I."/>
            <person name="Lou Y."/>
            <person name="Rohksar D."/>
            <person name="Lucas S."/>
            <person name="Huang K."/>
            <person name="Goodstein D.M."/>
            <person name="Hawkins T."/>
            <person name="Plengvidhya V."/>
            <person name="Welker D."/>
            <person name="Hughes J."/>
            <person name="Goh Y."/>
            <person name="Benson A."/>
            <person name="Baldwin K."/>
            <person name="Lee J.-H."/>
            <person name="Diaz-Muniz I."/>
            <person name="Dosti B."/>
            <person name="Smeianov V."/>
            <person name="Wechter W."/>
            <person name="Barabote R."/>
            <person name="Lorca G."/>
            <person name="Altermann E."/>
            <person name="Barrangou R."/>
            <person name="Ganesan B."/>
            <person name="Xie Y."/>
            <person name="Rawsthorne H."/>
            <person name="Tamir D."/>
            <person name="Parker C."/>
            <person name="Breidt F."/>
            <person name="Broadbent J.R."/>
            <person name="Hutkins R."/>
            <person name="O'Sullivan D."/>
            <person name="Steele J."/>
            <person name="Unlu G."/>
            <person name="Saier M.H. Jr."/>
            <person name="Klaenhammer T."/>
            <person name="Richardson P."/>
            <person name="Kozyavkin S."/>
            <person name="Weimer B.C."/>
            <person name="Mills D.A."/>
        </authorList>
    </citation>
    <scope>NUCLEOTIDE SEQUENCE [LARGE SCALE GENOMIC DNA]</scope>
    <source>
        <strain>ATCC BAA-491 / LMD-9</strain>
    </source>
</reference>
<dbReference type="EMBL" id="CP000419">
    <property type="protein sequence ID" value="ABJ65446.1"/>
    <property type="molecule type" value="Genomic_DNA"/>
</dbReference>
<dbReference type="RefSeq" id="WP_011680605.1">
    <property type="nucleotide sequence ID" value="NC_008532.1"/>
</dbReference>
<dbReference type="SMR" id="Q03MX6"/>
<dbReference type="KEGG" id="ste:STER_0076"/>
<dbReference type="HOGENOM" id="CLU_030805_9_3_9"/>
<dbReference type="CDD" id="cd00885">
    <property type="entry name" value="cinA"/>
    <property type="match status" value="1"/>
</dbReference>
<dbReference type="Gene3D" id="3.30.70.2860">
    <property type="match status" value="1"/>
</dbReference>
<dbReference type="Gene3D" id="3.90.950.20">
    <property type="entry name" value="CinA-like"/>
    <property type="match status" value="1"/>
</dbReference>
<dbReference type="Gene3D" id="3.40.980.10">
    <property type="entry name" value="MoaB/Mog-like domain"/>
    <property type="match status" value="1"/>
</dbReference>
<dbReference type="HAMAP" id="MF_00226_B">
    <property type="entry name" value="CinA_B"/>
    <property type="match status" value="1"/>
</dbReference>
<dbReference type="InterPro" id="IPR050101">
    <property type="entry name" value="CinA"/>
</dbReference>
<dbReference type="InterPro" id="IPR036653">
    <property type="entry name" value="CinA-like_C"/>
</dbReference>
<dbReference type="InterPro" id="IPR008136">
    <property type="entry name" value="CinA_C"/>
</dbReference>
<dbReference type="InterPro" id="IPR041424">
    <property type="entry name" value="CinA_KH"/>
</dbReference>
<dbReference type="InterPro" id="IPR008135">
    <property type="entry name" value="Competence-induced_CinA"/>
</dbReference>
<dbReference type="InterPro" id="IPR036425">
    <property type="entry name" value="MoaB/Mog-like_dom_sf"/>
</dbReference>
<dbReference type="InterPro" id="IPR001453">
    <property type="entry name" value="MoaB/Mog_dom"/>
</dbReference>
<dbReference type="NCBIfam" id="TIGR00200">
    <property type="entry name" value="cinA_nterm"/>
    <property type="match status" value="1"/>
</dbReference>
<dbReference type="NCBIfam" id="TIGR00177">
    <property type="entry name" value="molyb_syn"/>
    <property type="match status" value="1"/>
</dbReference>
<dbReference type="NCBIfam" id="TIGR00199">
    <property type="entry name" value="PncC_domain"/>
    <property type="match status" value="1"/>
</dbReference>
<dbReference type="NCBIfam" id="NF001813">
    <property type="entry name" value="PRK00549.1"/>
    <property type="match status" value="1"/>
</dbReference>
<dbReference type="PANTHER" id="PTHR13939">
    <property type="entry name" value="NICOTINAMIDE-NUCLEOTIDE AMIDOHYDROLASE PNCC"/>
    <property type="match status" value="1"/>
</dbReference>
<dbReference type="PANTHER" id="PTHR13939:SF0">
    <property type="entry name" value="NMN AMIDOHYDROLASE-LIKE PROTEIN YFAY"/>
    <property type="match status" value="1"/>
</dbReference>
<dbReference type="Pfam" id="PF02464">
    <property type="entry name" value="CinA"/>
    <property type="match status" value="1"/>
</dbReference>
<dbReference type="Pfam" id="PF18146">
    <property type="entry name" value="CinA_KH"/>
    <property type="match status" value="1"/>
</dbReference>
<dbReference type="Pfam" id="PF00994">
    <property type="entry name" value="MoCF_biosynth"/>
    <property type="match status" value="1"/>
</dbReference>
<dbReference type="PIRSF" id="PIRSF006728">
    <property type="entry name" value="CinA"/>
    <property type="match status" value="1"/>
</dbReference>
<dbReference type="SMART" id="SM00852">
    <property type="entry name" value="MoCF_biosynth"/>
    <property type="match status" value="1"/>
</dbReference>
<dbReference type="SUPFAM" id="SSF142433">
    <property type="entry name" value="CinA-like"/>
    <property type="match status" value="1"/>
</dbReference>
<dbReference type="SUPFAM" id="SSF53218">
    <property type="entry name" value="Molybdenum cofactor biosynthesis proteins"/>
    <property type="match status" value="1"/>
</dbReference>
<proteinExistence type="inferred from homology"/>
<comment type="similarity">
    <text evidence="1">Belongs to the CinA family.</text>
</comment>
<gene>
    <name evidence="1" type="primary">cinA</name>
    <name type="ordered locus">STER_0076</name>
</gene>
<evidence type="ECO:0000255" key="1">
    <source>
        <dbReference type="HAMAP-Rule" id="MF_00226"/>
    </source>
</evidence>